<accession>Q8TY87</accession>
<dbReference type="EMBL" id="AE009439">
    <property type="protein sequence ID" value="AAM01633.1"/>
    <property type="molecule type" value="Genomic_DNA"/>
</dbReference>
<dbReference type="SMR" id="Q8TY87"/>
<dbReference type="FunCoup" id="Q8TY87">
    <property type="interactions" value="120"/>
</dbReference>
<dbReference type="STRING" id="190192.MK0418"/>
<dbReference type="PaxDb" id="190192-MK0418"/>
<dbReference type="EnsemblBacteria" id="AAM01633">
    <property type="protein sequence ID" value="AAM01633"/>
    <property type="gene ID" value="MK0418"/>
</dbReference>
<dbReference type="KEGG" id="mka:MK0418"/>
<dbReference type="HOGENOM" id="CLU_199465_0_0_2"/>
<dbReference type="InParanoid" id="Q8TY87"/>
<dbReference type="Proteomes" id="UP000001826">
    <property type="component" value="Chromosome"/>
</dbReference>
<dbReference type="GO" id="GO:1990904">
    <property type="term" value="C:ribonucleoprotein complex"/>
    <property type="evidence" value="ECO:0007669"/>
    <property type="project" value="UniProtKB-KW"/>
</dbReference>
<dbReference type="GO" id="GO:0005840">
    <property type="term" value="C:ribosome"/>
    <property type="evidence" value="ECO:0007669"/>
    <property type="project" value="UniProtKB-KW"/>
</dbReference>
<dbReference type="GO" id="GO:0003735">
    <property type="term" value="F:structural constituent of ribosome"/>
    <property type="evidence" value="ECO:0007669"/>
    <property type="project" value="InterPro"/>
</dbReference>
<dbReference type="GO" id="GO:0008270">
    <property type="term" value="F:zinc ion binding"/>
    <property type="evidence" value="ECO:0007669"/>
    <property type="project" value="UniProtKB-UniRule"/>
</dbReference>
<dbReference type="GO" id="GO:0006412">
    <property type="term" value="P:translation"/>
    <property type="evidence" value="ECO:0007669"/>
    <property type="project" value="UniProtKB-UniRule"/>
</dbReference>
<dbReference type="FunFam" id="2.20.25.100:FF:000002">
    <property type="entry name" value="30S ribosomal protein S27e"/>
    <property type="match status" value="1"/>
</dbReference>
<dbReference type="Gene3D" id="2.20.25.100">
    <property type="entry name" value="Zn-binding ribosomal proteins"/>
    <property type="match status" value="1"/>
</dbReference>
<dbReference type="HAMAP" id="MF_00371">
    <property type="entry name" value="Ribosomal_eS27"/>
    <property type="match status" value="1"/>
</dbReference>
<dbReference type="InterPro" id="IPR000592">
    <property type="entry name" value="Ribosomal_eS27"/>
</dbReference>
<dbReference type="InterPro" id="IPR023407">
    <property type="entry name" value="Ribosomal_eS27_Zn-bd_dom_sf"/>
</dbReference>
<dbReference type="InterPro" id="IPR011332">
    <property type="entry name" value="Ribosomal_zn-bd"/>
</dbReference>
<dbReference type="NCBIfam" id="NF001629">
    <property type="entry name" value="PRK00415.1"/>
    <property type="match status" value="1"/>
</dbReference>
<dbReference type="PANTHER" id="PTHR11594">
    <property type="entry name" value="40S RIBOSOMAL PROTEIN S27"/>
    <property type="match status" value="1"/>
</dbReference>
<dbReference type="Pfam" id="PF01667">
    <property type="entry name" value="Ribosomal_S27e"/>
    <property type="match status" value="1"/>
</dbReference>
<dbReference type="SUPFAM" id="SSF57829">
    <property type="entry name" value="Zn-binding ribosomal proteins"/>
    <property type="match status" value="1"/>
</dbReference>
<dbReference type="PROSITE" id="PS01168">
    <property type="entry name" value="RIBOSOMAL_S27E"/>
    <property type="match status" value="1"/>
</dbReference>
<keyword id="KW-0479">Metal-binding</keyword>
<keyword id="KW-1185">Reference proteome</keyword>
<keyword id="KW-0687">Ribonucleoprotein</keyword>
<keyword id="KW-0689">Ribosomal protein</keyword>
<keyword id="KW-0862">Zinc</keyword>
<keyword id="KW-0863">Zinc-finger</keyword>
<feature type="chain" id="PRO_0000149073" description="Small ribosomal subunit protein eS27">
    <location>
        <begin position="1"/>
        <end position="73"/>
    </location>
</feature>
<feature type="zinc finger region" description="C4-type" evidence="1">
    <location>
        <begin position="28"/>
        <end position="50"/>
    </location>
</feature>
<feature type="binding site" evidence="1">
    <location>
        <position position="28"/>
    </location>
    <ligand>
        <name>Zn(2+)</name>
        <dbReference type="ChEBI" id="CHEBI:29105"/>
    </ligand>
</feature>
<feature type="binding site" evidence="1">
    <location>
        <position position="31"/>
    </location>
    <ligand>
        <name>Zn(2+)</name>
        <dbReference type="ChEBI" id="CHEBI:29105"/>
    </ligand>
</feature>
<feature type="binding site" evidence="1">
    <location>
        <position position="47"/>
    </location>
    <ligand>
        <name>Zn(2+)</name>
        <dbReference type="ChEBI" id="CHEBI:29105"/>
    </ligand>
</feature>
<feature type="binding site" evidence="1">
    <location>
        <position position="50"/>
    </location>
    <ligand>
        <name>Zn(2+)</name>
        <dbReference type="ChEBI" id="CHEBI:29105"/>
    </ligand>
</feature>
<organism>
    <name type="scientific">Methanopyrus kandleri (strain AV19 / DSM 6324 / JCM 9639 / NBRC 100938)</name>
    <dbReference type="NCBI Taxonomy" id="190192"/>
    <lineage>
        <taxon>Archaea</taxon>
        <taxon>Methanobacteriati</taxon>
        <taxon>Methanobacteriota</taxon>
        <taxon>Methanomada group</taxon>
        <taxon>Methanopyri</taxon>
        <taxon>Methanopyrales</taxon>
        <taxon>Methanopyraceae</taxon>
        <taxon>Methanopyrus</taxon>
    </lineage>
</organism>
<evidence type="ECO:0000255" key="1">
    <source>
        <dbReference type="HAMAP-Rule" id="MF_00371"/>
    </source>
</evidence>
<evidence type="ECO:0000305" key="2"/>
<sequence length="73" mass="8281">MDEKRFLKRFTESDLVPQPRSRFLRVECVDCGNEQIIFGNASTEVKCHICGRTLAKPTGGKAKILTKIKEVLE</sequence>
<comment type="cofactor">
    <cofactor evidence="1">
        <name>Zn(2+)</name>
        <dbReference type="ChEBI" id="CHEBI:29105"/>
    </cofactor>
    <text evidence="1">Binds 1 zinc ion per subunit.</text>
</comment>
<comment type="subunit">
    <text evidence="1">Part of the 30S ribosomal subunit.</text>
</comment>
<comment type="similarity">
    <text evidence="1">Belongs to the eukaryotic ribosomal protein eS27 family.</text>
</comment>
<name>RS27_METKA</name>
<proteinExistence type="inferred from homology"/>
<protein>
    <recommendedName>
        <fullName evidence="1">Small ribosomal subunit protein eS27</fullName>
    </recommendedName>
    <alternativeName>
        <fullName evidence="2">30S ribosomal protein S27e</fullName>
    </alternativeName>
</protein>
<gene>
    <name evidence="1" type="primary">rps27e</name>
    <name type="ordered locus">MK0418</name>
</gene>
<reference key="1">
    <citation type="journal article" date="2002" name="Proc. Natl. Acad. Sci. U.S.A.">
        <title>The complete genome of hyperthermophile Methanopyrus kandleri AV19 and monophyly of archaeal methanogens.</title>
        <authorList>
            <person name="Slesarev A.I."/>
            <person name="Mezhevaya K.V."/>
            <person name="Makarova K.S."/>
            <person name="Polushin N.N."/>
            <person name="Shcherbinina O.V."/>
            <person name="Shakhova V.V."/>
            <person name="Belova G.I."/>
            <person name="Aravind L."/>
            <person name="Natale D.A."/>
            <person name="Rogozin I.B."/>
            <person name="Tatusov R.L."/>
            <person name="Wolf Y.I."/>
            <person name="Stetter K.O."/>
            <person name="Malykh A.G."/>
            <person name="Koonin E.V."/>
            <person name="Kozyavkin S.A."/>
        </authorList>
    </citation>
    <scope>NUCLEOTIDE SEQUENCE [LARGE SCALE GENOMIC DNA]</scope>
    <source>
        <strain>AV19 / DSM 6324 / JCM 9639 / NBRC 100938</strain>
    </source>
</reference>